<reference key="1">
    <citation type="submission" date="1997-04" db="EMBL/GenBank/DDBJ databases">
        <authorList>
            <person name="Denizot F."/>
        </authorList>
    </citation>
    <scope>NUCLEOTIDE SEQUENCE [GENOMIC DNA]</scope>
</reference>
<reference key="2">
    <citation type="journal article" date="1997" name="Nature">
        <title>The complete genome sequence of the Gram-positive bacterium Bacillus subtilis.</title>
        <authorList>
            <person name="Kunst F."/>
            <person name="Ogasawara N."/>
            <person name="Moszer I."/>
            <person name="Albertini A.M."/>
            <person name="Alloni G."/>
            <person name="Azevedo V."/>
            <person name="Bertero M.G."/>
            <person name="Bessieres P."/>
            <person name="Bolotin A."/>
            <person name="Borchert S."/>
            <person name="Borriss R."/>
            <person name="Boursier L."/>
            <person name="Brans A."/>
            <person name="Braun M."/>
            <person name="Brignell S.C."/>
            <person name="Bron S."/>
            <person name="Brouillet S."/>
            <person name="Bruschi C.V."/>
            <person name="Caldwell B."/>
            <person name="Capuano V."/>
            <person name="Carter N.M."/>
            <person name="Choi S.-K."/>
            <person name="Codani J.-J."/>
            <person name="Connerton I.F."/>
            <person name="Cummings N.J."/>
            <person name="Daniel R.A."/>
            <person name="Denizot F."/>
            <person name="Devine K.M."/>
            <person name="Duesterhoeft A."/>
            <person name="Ehrlich S.D."/>
            <person name="Emmerson P.T."/>
            <person name="Entian K.-D."/>
            <person name="Errington J."/>
            <person name="Fabret C."/>
            <person name="Ferrari E."/>
            <person name="Foulger D."/>
            <person name="Fritz C."/>
            <person name="Fujita M."/>
            <person name="Fujita Y."/>
            <person name="Fuma S."/>
            <person name="Galizzi A."/>
            <person name="Galleron N."/>
            <person name="Ghim S.-Y."/>
            <person name="Glaser P."/>
            <person name="Goffeau A."/>
            <person name="Golightly E.J."/>
            <person name="Grandi G."/>
            <person name="Guiseppi G."/>
            <person name="Guy B.J."/>
            <person name="Haga K."/>
            <person name="Haiech J."/>
            <person name="Harwood C.R."/>
            <person name="Henaut A."/>
            <person name="Hilbert H."/>
            <person name="Holsappel S."/>
            <person name="Hosono S."/>
            <person name="Hullo M.-F."/>
            <person name="Itaya M."/>
            <person name="Jones L.-M."/>
            <person name="Joris B."/>
            <person name="Karamata D."/>
            <person name="Kasahara Y."/>
            <person name="Klaerr-Blanchard M."/>
            <person name="Klein C."/>
            <person name="Kobayashi Y."/>
            <person name="Koetter P."/>
            <person name="Koningstein G."/>
            <person name="Krogh S."/>
            <person name="Kumano M."/>
            <person name="Kurita K."/>
            <person name="Lapidus A."/>
            <person name="Lardinois S."/>
            <person name="Lauber J."/>
            <person name="Lazarevic V."/>
            <person name="Lee S.-M."/>
            <person name="Levine A."/>
            <person name="Liu H."/>
            <person name="Masuda S."/>
            <person name="Mauel C."/>
            <person name="Medigue C."/>
            <person name="Medina N."/>
            <person name="Mellado R.P."/>
            <person name="Mizuno M."/>
            <person name="Moestl D."/>
            <person name="Nakai S."/>
            <person name="Noback M."/>
            <person name="Noone D."/>
            <person name="O'Reilly M."/>
            <person name="Ogawa K."/>
            <person name="Ogiwara A."/>
            <person name="Oudega B."/>
            <person name="Park S.-H."/>
            <person name="Parro V."/>
            <person name="Pohl T.M."/>
            <person name="Portetelle D."/>
            <person name="Porwollik S."/>
            <person name="Prescott A.M."/>
            <person name="Presecan E."/>
            <person name="Pujic P."/>
            <person name="Purnelle B."/>
            <person name="Rapoport G."/>
            <person name="Rey M."/>
            <person name="Reynolds S."/>
            <person name="Rieger M."/>
            <person name="Rivolta C."/>
            <person name="Rocha E."/>
            <person name="Roche B."/>
            <person name="Rose M."/>
            <person name="Sadaie Y."/>
            <person name="Sato T."/>
            <person name="Scanlan E."/>
            <person name="Schleich S."/>
            <person name="Schroeter R."/>
            <person name="Scoffone F."/>
            <person name="Sekiguchi J."/>
            <person name="Sekowska A."/>
            <person name="Seror S.J."/>
            <person name="Serror P."/>
            <person name="Shin B.-S."/>
            <person name="Soldo B."/>
            <person name="Sorokin A."/>
            <person name="Tacconi E."/>
            <person name="Takagi T."/>
            <person name="Takahashi H."/>
            <person name="Takemaru K."/>
            <person name="Takeuchi M."/>
            <person name="Tamakoshi A."/>
            <person name="Tanaka T."/>
            <person name="Terpstra P."/>
            <person name="Tognoni A."/>
            <person name="Tosato V."/>
            <person name="Uchiyama S."/>
            <person name="Vandenbol M."/>
            <person name="Vannier F."/>
            <person name="Vassarotti A."/>
            <person name="Viari A."/>
            <person name="Wambutt R."/>
            <person name="Wedler E."/>
            <person name="Wedler H."/>
            <person name="Weitzenegger T."/>
            <person name="Winters P."/>
            <person name="Wipat A."/>
            <person name="Yamamoto H."/>
            <person name="Yamane K."/>
            <person name="Yasumoto K."/>
            <person name="Yata K."/>
            <person name="Yoshida K."/>
            <person name="Yoshikawa H.-F."/>
            <person name="Zumstein E."/>
            <person name="Yoshikawa H."/>
            <person name="Danchin A."/>
        </authorList>
    </citation>
    <scope>NUCLEOTIDE SEQUENCE [LARGE SCALE GENOMIC DNA]</scope>
    <source>
        <strain>168</strain>
    </source>
</reference>
<reference key="3">
    <citation type="journal article" date="2001" name="Mol. Microbiol.">
        <title>Functional analysis of the Bacillus subtilis morphogenetic spore coat protein CotE.</title>
        <authorList>
            <person name="Little S."/>
            <person name="Driks A."/>
        </authorList>
    </citation>
    <scope>DEVELOPMENTAL STAGE</scope>
    <scope>SUBCELLULAR LOCATION</scope>
    <source>
        <strain>168 / PY79</strain>
    </source>
</reference>
<keyword id="KW-0378">Hydrolase</keyword>
<keyword id="KW-0442">Lipid degradation</keyword>
<keyword id="KW-0443">Lipid metabolism</keyword>
<keyword id="KW-1185">Reference proteome</keyword>
<keyword id="KW-0749">Sporulation</keyword>
<sequence>MAKYRIMTFDGGGTLGALSLQLLNRLARQNPKLISRTHVFSGNSIGSFTALALASGRSPRETLQYFEDEILPAFSISRPGGPVFNQQLPYSGFIKAVRNFFPADLQLIDLRKRIVVPSFKLYSQKLDRWTPVLFHNFPGSPYLNEKVSDVILRSSGAPATQRAYQNYVDGYVVATNPSTASIAFAVGKANVPLDQIAVLSIGTGEAPTRLRRDTRGWGMVSADNIRPENLKNLPPNWGVLLDRSPNEPLLPFLQMIAGGNGYYESMVSANLLGDRFFRLDPRIPNFSKTDPAVVPAVIEIANKTNLQPANQFIEKNWGSK</sequence>
<proteinExistence type="evidence at transcript level"/>
<name>COTR_BACSU</name>
<evidence type="ECO:0000255" key="1">
    <source>
        <dbReference type="PROSITE-ProRule" id="PRU01161"/>
    </source>
</evidence>
<evidence type="ECO:0000269" key="2">
    <source>
    </source>
</evidence>
<evidence type="ECO:0000305" key="3">
    <source>
    </source>
</evidence>
<comment type="subcellular location">
    <subcellularLocation>
        <location evidence="3">Spore coat</location>
    </subcellularLocation>
</comment>
<comment type="developmental stage">
    <text evidence="2">Expressed during sporulation, in the late phase of coat protein synthesis.</text>
</comment>
<dbReference type="EC" id="3.1.1.-"/>
<dbReference type="EMBL" id="Z94043">
    <property type="protein sequence ID" value="CAB08044.1"/>
    <property type="molecule type" value="Genomic_DNA"/>
</dbReference>
<dbReference type="EMBL" id="AL009126">
    <property type="protein sequence ID" value="CAB15458.1"/>
    <property type="molecule type" value="Genomic_DNA"/>
</dbReference>
<dbReference type="PIR" id="F70034">
    <property type="entry name" value="F70034"/>
</dbReference>
<dbReference type="RefSeq" id="NP_391333.1">
    <property type="nucleotide sequence ID" value="NC_000964.3"/>
</dbReference>
<dbReference type="RefSeq" id="WP_003243674.1">
    <property type="nucleotide sequence ID" value="NZ_OZ025638.1"/>
</dbReference>
<dbReference type="SMR" id="O06996"/>
<dbReference type="FunCoup" id="O06996">
    <property type="interactions" value="22"/>
</dbReference>
<dbReference type="STRING" id="224308.BSU34530"/>
<dbReference type="PaxDb" id="224308-BSU34530"/>
<dbReference type="EnsemblBacteria" id="CAB15458">
    <property type="protein sequence ID" value="CAB15458"/>
    <property type="gene ID" value="BSU_34530"/>
</dbReference>
<dbReference type="GeneID" id="936427"/>
<dbReference type="KEGG" id="bsu:BSU34530"/>
<dbReference type="PATRIC" id="fig|224308.179.peg.3740"/>
<dbReference type="eggNOG" id="COG3621">
    <property type="taxonomic scope" value="Bacteria"/>
</dbReference>
<dbReference type="InParanoid" id="O06996"/>
<dbReference type="OrthoDB" id="9807112at2"/>
<dbReference type="PhylomeDB" id="O06996"/>
<dbReference type="BioCyc" id="BSUB:BSU34530-MONOMER"/>
<dbReference type="Proteomes" id="UP000001570">
    <property type="component" value="Chromosome"/>
</dbReference>
<dbReference type="GO" id="GO:0016787">
    <property type="term" value="F:hydrolase activity"/>
    <property type="evidence" value="ECO:0007669"/>
    <property type="project" value="UniProtKB-KW"/>
</dbReference>
<dbReference type="GO" id="GO:0016042">
    <property type="term" value="P:lipid catabolic process"/>
    <property type="evidence" value="ECO:0007669"/>
    <property type="project" value="UniProtKB-KW"/>
</dbReference>
<dbReference type="GO" id="GO:0030435">
    <property type="term" value="P:sporulation resulting in formation of a cellular spore"/>
    <property type="evidence" value="ECO:0007669"/>
    <property type="project" value="UniProtKB-KW"/>
</dbReference>
<dbReference type="CDD" id="cd07213">
    <property type="entry name" value="Pat17_PNPLA8_PNPLA9_like1"/>
    <property type="match status" value="1"/>
</dbReference>
<dbReference type="Gene3D" id="3.40.1090.10">
    <property type="entry name" value="Cytosolic phospholipase A2 catalytic domain"/>
    <property type="match status" value="1"/>
</dbReference>
<dbReference type="InterPro" id="IPR016035">
    <property type="entry name" value="Acyl_Trfase/lysoPLipase"/>
</dbReference>
<dbReference type="InterPro" id="IPR002641">
    <property type="entry name" value="PNPLA_dom"/>
</dbReference>
<dbReference type="InterPro" id="IPR047156">
    <property type="entry name" value="Teg/CotR/CapV-like"/>
</dbReference>
<dbReference type="PANTHER" id="PTHR24138">
    <property type="entry name" value="INTRACELLLAR PHOSPHOLIPASE A FAMILY"/>
    <property type="match status" value="1"/>
</dbReference>
<dbReference type="PANTHER" id="PTHR24138:SF10">
    <property type="entry name" value="PHOSPHOLIPASE A2"/>
    <property type="match status" value="1"/>
</dbReference>
<dbReference type="Pfam" id="PF01734">
    <property type="entry name" value="Patatin"/>
    <property type="match status" value="1"/>
</dbReference>
<dbReference type="SUPFAM" id="SSF52151">
    <property type="entry name" value="FabD/lysophospholipase-like"/>
    <property type="match status" value="1"/>
</dbReference>
<dbReference type="PROSITE" id="PS51635">
    <property type="entry name" value="PNPLA"/>
    <property type="match status" value="1"/>
</dbReference>
<feature type="chain" id="PRO_0000360659" description="Putative sporulation hydrolase CotR">
    <location>
        <begin position="1"/>
        <end position="320"/>
    </location>
</feature>
<feature type="domain" description="PNPLA" evidence="1">
    <location>
        <begin position="7"/>
        <end position="182"/>
    </location>
</feature>
<feature type="short sequence motif" description="GXGXXG" evidence="1">
    <location>
        <begin position="11"/>
        <end position="16"/>
    </location>
</feature>
<feature type="short sequence motif" description="GXSXG" evidence="1">
    <location>
        <begin position="42"/>
        <end position="46"/>
    </location>
</feature>
<feature type="active site" description="Nucleophile" evidence="1">
    <location>
        <position position="44"/>
    </location>
</feature>
<feature type="active site" description="Proton acceptor" evidence="1">
    <location>
        <position position="169"/>
    </location>
</feature>
<accession>O06996</accession>
<accession>Q795H2</accession>
<protein>
    <recommendedName>
        <fullName>Putative sporulation hydrolase CotR</fullName>
        <ecNumber>3.1.1.-</ecNumber>
    </recommendedName>
</protein>
<organism>
    <name type="scientific">Bacillus subtilis (strain 168)</name>
    <dbReference type="NCBI Taxonomy" id="224308"/>
    <lineage>
        <taxon>Bacteria</taxon>
        <taxon>Bacillati</taxon>
        <taxon>Bacillota</taxon>
        <taxon>Bacilli</taxon>
        <taxon>Bacillales</taxon>
        <taxon>Bacillaceae</taxon>
        <taxon>Bacillus</taxon>
    </lineage>
</organism>
<gene>
    <name type="primary">cotR</name>
    <name type="synonym">yvdO</name>
    <name type="ordered locus">BSU34530</name>
</gene>